<keyword id="KW-1185">Reference proteome</keyword>
<keyword id="KW-0687">Ribonucleoprotein</keyword>
<keyword id="KW-0689">Ribosomal protein</keyword>
<keyword id="KW-0694">RNA-binding</keyword>
<keyword id="KW-0699">rRNA-binding</keyword>
<evidence type="ECO:0000255" key="1">
    <source>
        <dbReference type="HAMAP-Rule" id="MF_01343"/>
    </source>
</evidence>
<evidence type="ECO:0000305" key="2"/>
<sequence length="89" mass="10341">MSITPEEKARLMKEFATKEGDTGSPEVQVAILTSRISTLTEHFKSHKKDNHSRRGLLMMVAQRRKLLDYARAKDEGRYQDLIKRLGIRR</sequence>
<comment type="function">
    <text evidence="1">One of the primary rRNA binding proteins, it binds directly to 16S rRNA where it helps nucleate assembly of the platform of the 30S subunit by binding and bridging several RNA helices of the 16S rRNA.</text>
</comment>
<comment type="function">
    <text evidence="1">Forms an intersubunit bridge (bridge B4) with the 23S rRNA of the 50S subunit in the ribosome.</text>
</comment>
<comment type="subunit">
    <text evidence="1">Part of the 30S ribosomal subunit. Forms a bridge to the 50S subunit in the 70S ribosome, contacting the 23S rRNA.</text>
</comment>
<comment type="similarity">
    <text evidence="1">Belongs to the universal ribosomal protein uS15 family.</text>
</comment>
<accession>Q28K15</accession>
<organism>
    <name type="scientific">Jannaschia sp. (strain CCS1)</name>
    <dbReference type="NCBI Taxonomy" id="290400"/>
    <lineage>
        <taxon>Bacteria</taxon>
        <taxon>Pseudomonadati</taxon>
        <taxon>Pseudomonadota</taxon>
        <taxon>Alphaproteobacteria</taxon>
        <taxon>Rhodobacterales</taxon>
        <taxon>Roseobacteraceae</taxon>
        <taxon>Jannaschia</taxon>
    </lineage>
</organism>
<protein>
    <recommendedName>
        <fullName evidence="1">Small ribosomal subunit protein uS15</fullName>
    </recommendedName>
    <alternativeName>
        <fullName evidence="2">30S ribosomal protein S15</fullName>
    </alternativeName>
</protein>
<name>RS15_JANSC</name>
<reference key="1">
    <citation type="submission" date="2006-02" db="EMBL/GenBank/DDBJ databases">
        <title>Complete sequence of chromosome of Jannaschia sp. CCS1.</title>
        <authorList>
            <consortium name="US DOE Joint Genome Institute"/>
            <person name="Copeland A."/>
            <person name="Lucas S."/>
            <person name="Lapidus A."/>
            <person name="Barry K."/>
            <person name="Detter J.C."/>
            <person name="Glavina del Rio T."/>
            <person name="Hammon N."/>
            <person name="Israni S."/>
            <person name="Pitluck S."/>
            <person name="Brettin T."/>
            <person name="Bruce D."/>
            <person name="Han C."/>
            <person name="Tapia R."/>
            <person name="Gilna P."/>
            <person name="Chertkov O."/>
            <person name="Saunders E."/>
            <person name="Schmutz J."/>
            <person name="Larimer F."/>
            <person name="Land M."/>
            <person name="Kyrpides N."/>
            <person name="Lykidis A."/>
            <person name="Moran M.A."/>
            <person name="Belas R."/>
            <person name="Ye W."/>
            <person name="Buchan A."/>
            <person name="Gonzalez J.M."/>
            <person name="Schell M.A."/>
            <person name="Richardson P."/>
        </authorList>
    </citation>
    <scope>NUCLEOTIDE SEQUENCE [LARGE SCALE GENOMIC DNA]</scope>
    <source>
        <strain>CCS1</strain>
    </source>
</reference>
<dbReference type="EMBL" id="CP000264">
    <property type="protein sequence ID" value="ABD56947.1"/>
    <property type="molecule type" value="Genomic_DNA"/>
</dbReference>
<dbReference type="RefSeq" id="WP_011457143.1">
    <property type="nucleotide sequence ID" value="NC_007802.1"/>
</dbReference>
<dbReference type="SMR" id="Q28K15"/>
<dbReference type="STRING" id="290400.Jann_4030"/>
<dbReference type="KEGG" id="jan:Jann_4030"/>
<dbReference type="eggNOG" id="COG0184">
    <property type="taxonomic scope" value="Bacteria"/>
</dbReference>
<dbReference type="HOGENOM" id="CLU_148518_0_0_5"/>
<dbReference type="OrthoDB" id="9799262at2"/>
<dbReference type="Proteomes" id="UP000008326">
    <property type="component" value="Chromosome"/>
</dbReference>
<dbReference type="GO" id="GO:0022627">
    <property type="term" value="C:cytosolic small ribosomal subunit"/>
    <property type="evidence" value="ECO:0007669"/>
    <property type="project" value="TreeGrafter"/>
</dbReference>
<dbReference type="GO" id="GO:0019843">
    <property type="term" value="F:rRNA binding"/>
    <property type="evidence" value="ECO:0007669"/>
    <property type="project" value="UniProtKB-UniRule"/>
</dbReference>
<dbReference type="GO" id="GO:0003735">
    <property type="term" value="F:structural constituent of ribosome"/>
    <property type="evidence" value="ECO:0007669"/>
    <property type="project" value="InterPro"/>
</dbReference>
<dbReference type="GO" id="GO:0006412">
    <property type="term" value="P:translation"/>
    <property type="evidence" value="ECO:0007669"/>
    <property type="project" value="UniProtKB-UniRule"/>
</dbReference>
<dbReference type="CDD" id="cd00353">
    <property type="entry name" value="Ribosomal_S15p_S13e"/>
    <property type="match status" value="1"/>
</dbReference>
<dbReference type="FunFam" id="1.10.287.10:FF:000002">
    <property type="entry name" value="30S ribosomal protein S15"/>
    <property type="match status" value="1"/>
</dbReference>
<dbReference type="Gene3D" id="6.10.250.3130">
    <property type="match status" value="1"/>
</dbReference>
<dbReference type="Gene3D" id="1.10.287.10">
    <property type="entry name" value="S15/NS1, RNA-binding"/>
    <property type="match status" value="1"/>
</dbReference>
<dbReference type="HAMAP" id="MF_01343_B">
    <property type="entry name" value="Ribosomal_uS15_B"/>
    <property type="match status" value="1"/>
</dbReference>
<dbReference type="InterPro" id="IPR000589">
    <property type="entry name" value="Ribosomal_uS15"/>
</dbReference>
<dbReference type="InterPro" id="IPR005290">
    <property type="entry name" value="Ribosomal_uS15_bac-type"/>
</dbReference>
<dbReference type="InterPro" id="IPR009068">
    <property type="entry name" value="uS15_NS1_RNA-bd_sf"/>
</dbReference>
<dbReference type="NCBIfam" id="TIGR00952">
    <property type="entry name" value="S15_bact"/>
    <property type="match status" value="1"/>
</dbReference>
<dbReference type="PANTHER" id="PTHR23321">
    <property type="entry name" value="RIBOSOMAL PROTEIN S15, BACTERIAL AND ORGANELLAR"/>
    <property type="match status" value="1"/>
</dbReference>
<dbReference type="PANTHER" id="PTHR23321:SF26">
    <property type="entry name" value="SMALL RIBOSOMAL SUBUNIT PROTEIN US15M"/>
    <property type="match status" value="1"/>
</dbReference>
<dbReference type="Pfam" id="PF00312">
    <property type="entry name" value="Ribosomal_S15"/>
    <property type="match status" value="1"/>
</dbReference>
<dbReference type="SMART" id="SM01387">
    <property type="entry name" value="Ribosomal_S15"/>
    <property type="match status" value="1"/>
</dbReference>
<dbReference type="SUPFAM" id="SSF47060">
    <property type="entry name" value="S15/NS1 RNA-binding domain"/>
    <property type="match status" value="1"/>
</dbReference>
<dbReference type="PROSITE" id="PS00362">
    <property type="entry name" value="RIBOSOMAL_S15"/>
    <property type="match status" value="1"/>
</dbReference>
<proteinExistence type="inferred from homology"/>
<feature type="chain" id="PRO_0000255500" description="Small ribosomal subunit protein uS15">
    <location>
        <begin position="1"/>
        <end position="89"/>
    </location>
</feature>
<gene>
    <name evidence="1" type="primary">rpsO</name>
    <name type="ordered locus">Jann_4030</name>
</gene>